<name>PYRB_BACC1</name>
<feature type="chain" id="PRO_0000113090" description="Aspartate carbamoyltransferase catalytic subunit">
    <location>
        <begin position="1"/>
        <end position="304"/>
    </location>
</feature>
<feature type="binding site" evidence="1">
    <location>
        <position position="49"/>
    </location>
    <ligand>
        <name>carbamoyl phosphate</name>
        <dbReference type="ChEBI" id="CHEBI:58228"/>
    </ligand>
</feature>
<feature type="binding site" evidence="1">
    <location>
        <position position="50"/>
    </location>
    <ligand>
        <name>carbamoyl phosphate</name>
        <dbReference type="ChEBI" id="CHEBI:58228"/>
    </ligand>
</feature>
<feature type="binding site" evidence="1">
    <location>
        <position position="77"/>
    </location>
    <ligand>
        <name>L-aspartate</name>
        <dbReference type="ChEBI" id="CHEBI:29991"/>
    </ligand>
</feature>
<feature type="binding site" evidence="1">
    <location>
        <position position="99"/>
    </location>
    <ligand>
        <name>carbamoyl phosphate</name>
        <dbReference type="ChEBI" id="CHEBI:58228"/>
    </ligand>
</feature>
<feature type="binding site" evidence="1">
    <location>
        <position position="127"/>
    </location>
    <ligand>
        <name>carbamoyl phosphate</name>
        <dbReference type="ChEBI" id="CHEBI:58228"/>
    </ligand>
</feature>
<feature type="binding site" evidence="1">
    <location>
        <position position="130"/>
    </location>
    <ligand>
        <name>carbamoyl phosphate</name>
        <dbReference type="ChEBI" id="CHEBI:58228"/>
    </ligand>
</feature>
<feature type="binding site" evidence="1">
    <location>
        <position position="160"/>
    </location>
    <ligand>
        <name>L-aspartate</name>
        <dbReference type="ChEBI" id="CHEBI:29991"/>
    </ligand>
</feature>
<feature type="binding site" evidence="1">
    <location>
        <position position="211"/>
    </location>
    <ligand>
        <name>L-aspartate</name>
        <dbReference type="ChEBI" id="CHEBI:29991"/>
    </ligand>
</feature>
<feature type="binding site" evidence="1">
    <location>
        <position position="252"/>
    </location>
    <ligand>
        <name>carbamoyl phosphate</name>
        <dbReference type="ChEBI" id="CHEBI:58228"/>
    </ligand>
</feature>
<feature type="binding site" evidence="1">
    <location>
        <position position="253"/>
    </location>
    <ligand>
        <name>carbamoyl phosphate</name>
        <dbReference type="ChEBI" id="CHEBI:58228"/>
    </ligand>
</feature>
<accession>Q732I0</accession>
<evidence type="ECO:0000255" key="1">
    <source>
        <dbReference type="HAMAP-Rule" id="MF_00001"/>
    </source>
</evidence>
<sequence length="304" mass="34688">MSHLLTMSELSEVEISEILKDAEDFANGKESKTTEQTFVANLFFENSTRTRFSFEVAEKRLGLDVLNFSADASSVQKGETLYDTIRTLESIGTKAVVIRHEQDRYFDELKDQVNIPILNAGDGCGNHPTQCLLDLLTIKQEFGRFEGLKIAIVGDVRHSRVARSNAEALTKLGATIYFASPEEWKDEDNTFGTYKPLDELVPEVDVMMLLRVQHERHDHYETDIMKEYHEKHGLTVEREQRMKEGSIIMHPAPVNRDVEIASELVECERSRIFKQMENGVYVRMAVLKRALPNVLGGMKHELLV</sequence>
<keyword id="KW-0665">Pyrimidine biosynthesis</keyword>
<keyword id="KW-0808">Transferase</keyword>
<comment type="function">
    <text evidence="1">Catalyzes the condensation of carbamoyl phosphate and aspartate to form carbamoyl aspartate and inorganic phosphate, the committed step in the de novo pyrimidine nucleotide biosynthesis pathway.</text>
</comment>
<comment type="catalytic activity">
    <reaction evidence="1">
        <text>carbamoyl phosphate + L-aspartate = N-carbamoyl-L-aspartate + phosphate + H(+)</text>
        <dbReference type="Rhea" id="RHEA:20013"/>
        <dbReference type="ChEBI" id="CHEBI:15378"/>
        <dbReference type="ChEBI" id="CHEBI:29991"/>
        <dbReference type="ChEBI" id="CHEBI:32814"/>
        <dbReference type="ChEBI" id="CHEBI:43474"/>
        <dbReference type="ChEBI" id="CHEBI:58228"/>
        <dbReference type="EC" id="2.1.3.2"/>
    </reaction>
</comment>
<comment type="pathway">
    <text evidence="1">Pyrimidine metabolism; UMP biosynthesis via de novo pathway; (S)-dihydroorotate from bicarbonate: step 2/3.</text>
</comment>
<comment type="subunit">
    <text evidence="1">Heterododecamer (2C3:3R2) of six catalytic PyrB chains organized as two trimers (C3), and six regulatory PyrI chains organized as three dimers (R2).</text>
</comment>
<comment type="similarity">
    <text evidence="1">Belongs to the aspartate/ornithine carbamoyltransferase superfamily. ATCase family.</text>
</comment>
<protein>
    <recommendedName>
        <fullName evidence="1">Aspartate carbamoyltransferase catalytic subunit</fullName>
        <ecNumber evidence="1">2.1.3.2</ecNumber>
    </recommendedName>
    <alternativeName>
        <fullName evidence="1">Aspartate transcarbamylase</fullName>
        <shortName evidence="1">ATCase</shortName>
    </alternativeName>
</protein>
<organism>
    <name type="scientific">Bacillus cereus (strain ATCC 10987 / NRS 248)</name>
    <dbReference type="NCBI Taxonomy" id="222523"/>
    <lineage>
        <taxon>Bacteria</taxon>
        <taxon>Bacillati</taxon>
        <taxon>Bacillota</taxon>
        <taxon>Bacilli</taxon>
        <taxon>Bacillales</taxon>
        <taxon>Bacillaceae</taxon>
        <taxon>Bacillus</taxon>
        <taxon>Bacillus cereus group</taxon>
    </lineage>
</organism>
<proteinExistence type="inferred from homology"/>
<dbReference type="EC" id="2.1.3.2" evidence="1"/>
<dbReference type="EMBL" id="AE017194">
    <property type="protein sequence ID" value="AAS42837.1"/>
    <property type="molecule type" value="Genomic_DNA"/>
</dbReference>
<dbReference type="SMR" id="Q732I0"/>
<dbReference type="KEGG" id="bca:BCE_3934"/>
<dbReference type="HOGENOM" id="CLU_043846_2_1_9"/>
<dbReference type="UniPathway" id="UPA00070">
    <property type="reaction ID" value="UER00116"/>
</dbReference>
<dbReference type="Proteomes" id="UP000002527">
    <property type="component" value="Chromosome"/>
</dbReference>
<dbReference type="GO" id="GO:0005829">
    <property type="term" value="C:cytosol"/>
    <property type="evidence" value="ECO:0007669"/>
    <property type="project" value="TreeGrafter"/>
</dbReference>
<dbReference type="GO" id="GO:0016597">
    <property type="term" value="F:amino acid binding"/>
    <property type="evidence" value="ECO:0007669"/>
    <property type="project" value="InterPro"/>
</dbReference>
<dbReference type="GO" id="GO:0004070">
    <property type="term" value="F:aspartate carbamoyltransferase activity"/>
    <property type="evidence" value="ECO:0007669"/>
    <property type="project" value="UniProtKB-UniRule"/>
</dbReference>
<dbReference type="GO" id="GO:0006207">
    <property type="term" value="P:'de novo' pyrimidine nucleobase biosynthetic process"/>
    <property type="evidence" value="ECO:0007669"/>
    <property type="project" value="InterPro"/>
</dbReference>
<dbReference type="GO" id="GO:0044205">
    <property type="term" value="P:'de novo' UMP biosynthetic process"/>
    <property type="evidence" value="ECO:0007669"/>
    <property type="project" value="UniProtKB-UniRule"/>
</dbReference>
<dbReference type="GO" id="GO:0006520">
    <property type="term" value="P:amino acid metabolic process"/>
    <property type="evidence" value="ECO:0007669"/>
    <property type="project" value="InterPro"/>
</dbReference>
<dbReference type="FunFam" id="3.40.50.1370:FF:000001">
    <property type="entry name" value="Aspartate carbamoyltransferase"/>
    <property type="match status" value="1"/>
</dbReference>
<dbReference type="FunFam" id="3.40.50.1370:FF:000011">
    <property type="entry name" value="Aspartate carbamoyltransferase"/>
    <property type="match status" value="1"/>
</dbReference>
<dbReference type="Gene3D" id="3.40.50.1370">
    <property type="entry name" value="Aspartate/ornithine carbamoyltransferase"/>
    <property type="match status" value="2"/>
</dbReference>
<dbReference type="HAMAP" id="MF_00001">
    <property type="entry name" value="Asp_carb_tr"/>
    <property type="match status" value="1"/>
</dbReference>
<dbReference type="InterPro" id="IPR006132">
    <property type="entry name" value="Asp/Orn_carbamoyltranf_P-bd"/>
</dbReference>
<dbReference type="InterPro" id="IPR006130">
    <property type="entry name" value="Asp/Orn_carbamoylTrfase"/>
</dbReference>
<dbReference type="InterPro" id="IPR036901">
    <property type="entry name" value="Asp/Orn_carbamoylTrfase_sf"/>
</dbReference>
<dbReference type="InterPro" id="IPR002082">
    <property type="entry name" value="Asp_carbamoyltransf"/>
</dbReference>
<dbReference type="InterPro" id="IPR006131">
    <property type="entry name" value="Asp_carbamoyltransf_Asp/Orn-bd"/>
</dbReference>
<dbReference type="NCBIfam" id="TIGR00670">
    <property type="entry name" value="asp_carb_tr"/>
    <property type="match status" value="1"/>
</dbReference>
<dbReference type="NCBIfam" id="NF002032">
    <property type="entry name" value="PRK00856.1"/>
    <property type="match status" value="1"/>
</dbReference>
<dbReference type="PANTHER" id="PTHR45753:SF6">
    <property type="entry name" value="ASPARTATE CARBAMOYLTRANSFERASE"/>
    <property type="match status" value="1"/>
</dbReference>
<dbReference type="PANTHER" id="PTHR45753">
    <property type="entry name" value="ORNITHINE CARBAMOYLTRANSFERASE, MITOCHONDRIAL"/>
    <property type="match status" value="1"/>
</dbReference>
<dbReference type="Pfam" id="PF00185">
    <property type="entry name" value="OTCace"/>
    <property type="match status" value="1"/>
</dbReference>
<dbReference type="Pfam" id="PF02729">
    <property type="entry name" value="OTCace_N"/>
    <property type="match status" value="1"/>
</dbReference>
<dbReference type="PRINTS" id="PR00100">
    <property type="entry name" value="AOTCASE"/>
</dbReference>
<dbReference type="PRINTS" id="PR00101">
    <property type="entry name" value="ATCASE"/>
</dbReference>
<dbReference type="SUPFAM" id="SSF53671">
    <property type="entry name" value="Aspartate/ornithine carbamoyltransferase"/>
    <property type="match status" value="1"/>
</dbReference>
<dbReference type="PROSITE" id="PS00097">
    <property type="entry name" value="CARBAMOYLTRANSFERASE"/>
    <property type="match status" value="1"/>
</dbReference>
<gene>
    <name evidence="1" type="primary">pyrB</name>
    <name type="ordered locus">BCE_3934</name>
</gene>
<reference key="1">
    <citation type="journal article" date="2004" name="Nucleic Acids Res.">
        <title>The genome sequence of Bacillus cereus ATCC 10987 reveals metabolic adaptations and a large plasmid related to Bacillus anthracis pXO1.</title>
        <authorList>
            <person name="Rasko D.A."/>
            <person name="Ravel J."/>
            <person name="Oekstad O.A."/>
            <person name="Helgason E."/>
            <person name="Cer R.Z."/>
            <person name="Jiang L."/>
            <person name="Shores K.A."/>
            <person name="Fouts D.E."/>
            <person name="Tourasse N.J."/>
            <person name="Angiuoli S.V."/>
            <person name="Kolonay J.F."/>
            <person name="Nelson W.C."/>
            <person name="Kolstoe A.-B."/>
            <person name="Fraser C.M."/>
            <person name="Read T.D."/>
        </authorList>
    </citation>
    <scope>NUCLEOTIDE SEQUENCE [LARGE SCALE GENOMIC DNA]</scope>
    <source>
        <strain>ATCC 10987 / NRS 248</strain>
    </source>
</reference>